<feature type="chain" id="PRO_0000453041" description="Kinesin-like protein KIF3B">
    <location>
        <begin position="1"/>
        <end position="775"/>
    </location>
</feature>
<feature type="domain" description="Kinesin motor" evidence="3">
    <location>
        <begin position="9"/>
        <end position="341"/>
    </location>
</feature>
<feature type="region of interest" description="Disordered" evidence="4">
    <location>
        <begin position="372"/>
        <end position="419"/>
    </location>
</feature>
<feature type="region of interest" description="Disordered" evidence="4">
    <location>
        <begin position="716"/>
        <end position="775"/>
    </location>
</feature>
<feature type="coiled-coil region" evidence="2">
    <location>
        <begin position="501"/>
        <end position="591"/>
    </location>
</feature>
<feature type="compositionally biased region" description="Basic residues" evidence="4">
    <location>
        <begin position="374"/>
        <end position="385"/>
    </location>
</feature>
<feature type="compositionally biased region" description="Acidic residues" evidence="4">
    <location>
        <begin position="389"/>
        <end position="413"/>
    </location>
</feature>
<feature type="compositionally biased region" description="Low complexity" evidence="4">
    <location>
        <begin position="718"/>
        <end position="734"/>
    </location>
</feature>
<feature type="compositionally biased region" description="Basic residues" evidence="4">
    <location>
        <begin position="735"/>
        <end position="746"/>
    </location>
</feature>
<feature type="compositionally biased region" description="Low complexity" evidence="4">
    <location>
        <begin position="756"/>
        <end position="765"/>
    </location>
</feature>
<feature type="binding site" evidence="3">
    <location>
        <begin position="97"/>
        <end position="104"/>
    </location>
    <ligand>
        <name>ATP</name>
        <dbReference type="ChEBI" id="CHEBI:30616"/>
    </ligand>
</feature>
<feature type="sequence conflict" description="In Ref. 2; AAI46723." evidence="7" ref="2">
    <original>R</original>
    <variation>C</variation>
    <location>
        <position position="133"/>
    </location>
</feature>
<comment type="function">
    <text evidence="1 5 6">Microtubule-based molecular motor that transport intracellular cargos, such as vesicles, organelles and protein complexes. Uses ATP hydrolysis to generate force to bind and move along the microtubule (By similarity). Plays a role in cilia formation. Required for photoreceptor development (PubMed:22308397, PubMed:28855254).</text>
</comment>
<comment type="subunit">
    <text evidence="1">Heterodimer of KIF3A and KIF3B. KIF3A/KIF3B heterodimer interacts with KIFAP3 forming a heterotrimeric (KIF3A/KIF3B/KIFAP3) complex.</text>
</comment>
<comment type="subcellular location">
    <subcellularLocation>
        <location evidence="1">Cytoplasm</location>
        <location evidence="1">Cytoskeleton</location>
    </subcellularLocation>
    <subcellularLocation>
        <location evidence="1">Cell projection</location>
        <location evidence="1">Cilium</location>
    </subcellularLocation>
    <subcellularLocation>
        <location evidence="1">Cell projection</location>
        <location evidence="1">Dendritic spine</location>
    </subcellularLocation>
</comment>
<comment type="disruption phenotype">
    <text evidence="5 6">Loss of function of Kif3b only results in ciliogenesis defects in a subset of cilia. Robust cilia are still present in the central nervous system. Mutant have rapid rod degeneration and delayed outer segment genesis, but cones appear normal. The mild phenotype of kif3b mutants may be related to the presence of the kif3c protein.</text>
</comment>
<comment type="similarity">
    <text evidence="3">Belongs to the TRAFAC class myosin-kinesin ATPase superfamily. Kinesin family.</text>
</comment>
<evidence type="ECO:0000250" key="1">
    <source>
        <dbReference type="UniProtKB" id="Q61771"/>
    </source>
</evidence>
<evidence type="ECO:0000255" key="2"/>
<evidence type="ECO:0000255" key="3">
    <source>
        <dbReference type="PROSITE-ProRule" id="PRU00283"/>
    </source>
</evidence>
<evidence type="ECO:0000256" key="4">
    <source>
        <dbReference type="SAM" id="MobiDB-lite"/>
    </source>
</evidence>
<evidence type="ECO:0000269" key="5">
    <source>
    </source>
</evidence>
<evidence type="ECO:0000269" key="6">
    <source>
    </source>
</evidence>
<evidence type="ECO:0000305" key="7"/>
<evidence type="ECO:0000312" key="8">
    <source>
        <dbReference type="ZFIN" id="ZDB-GENE-050119-3"/>
    </source>
</evidence>
<proteinExistence type="evidence at transcript level"/>
<organism>
    <name type="scientific">Danio rerio</name>
    <name type="common">Zebrafish</name>
    <name type="synonym">Brachydanio rerio</name>
    <dbReference type="NCBI Taxonomy" id="7955"/>
    <lineage>
        <taxon>Eukaryota</taxon>
        <taxon>Metazoa</taxon>
        <taxon>Chordata</taxon>
        <taxon>Craniata</taxon>
        <taxon>Vertebrata</taxon>
        <taxon>Euteleostomi</taxon>
        <taxon>Actinopterygii</taxon>
        <taxon>Neopterygii</taxon>
        <taxon>Teleostei</taxon>
        <taxon>Ostariophysi</taxon>
        <taxon>Cypriniformes</taxon>
        <taxon>Danionidae</taxon>
        <taxon>Danioninae</taxon>
        <taxon>Danio</taxon>
    </lineage>
</organism>
<name>KIF3B_DANRE</name>
<protein>
    <recommendedName>
        <fullName>Kinesin-like protein KIF3B</fullName>
    </recommendedName>
</protein>
<reference key="1">
    <citation type="journal article" date="2013" name="Nature">
        <title>The zebrafish reference genome sequence and its relationship to the human genome.</title>
        <authorList>
            <person name="Howe K."/>
            <person name="Clark M.D."/>
            <person name="Torroja C.F."/>
            <person name="Torrance J."/>
            <person name="Berthelot C."/>
            <person name="Muffato M."/>
            <person name="Collins J.E."/>
            <person name="Humphray S."/>
            <person name="McLaren K."/>
            <person name="Matthews L."/>
            <person name="McLaren S."/>
            <person name="Sealy I."/>
            <person name="Caccamo M."/>
            <person name="Churcher C."/>
            <person name="Scott C."/>
            <person name="Barrett J.C."/>
            <person name="Koch R."/>
            <person name="Rauch G.J."/>
            <person name="White S."/>
            <person name="Chow W."/>
            <person name="Kilian B."/>
            <person name="Quintais L.T."/>
            <person name="Guerra-Assuncao J.A."/>
            <person name="Zhou Y."/>
            <person name="Gu Y."/>
            <person name="Yen J."/>
            <person name="Vogel J.H."/>
            <person name="Eyre T."/>
            <person name="Redmond S."/>
            <person name="Banerjee R."/>
            <person name="Chi J."/>
            <person name="Fu B."/>
            <person name="Langley E."/>
            <person name="Maguire S.F."/>
            <person name="Laird G.K."/>
            <person name="Lloyd D."/>
            <person name="Kenyon E."/>
            <person name="Donaldson S."/>
            <person name="Sehra H."/>
            <person name="Almeida-King J."/>
            <person name="Loveland J."/>
            <person name="Trevanion S."/>
            <person name="Jones M."/>
            <person name="Quail M."/>
            <person name="Willey D."/>
            <person name="Hunt A."/>
            <person name="Burton J."/>
            <person name="Sims S."/>
            <person name="McLay K."/>
            <person name="Plumb B."/>
            <person name="Davis J."/>
            <person name="Clee C."/>
            <person name="Oliver K."/>
            <person name="Clark R."/>
            <person name="Riddle C."/>
            <person name="Elliot D."/>
            <person name="Threadgold G."/>
            <person name="Harden G."/>
            <person name="Ware D."/>
            <person name="Begum S."/>
            <person name="Mortimore B."/>
            <person name="Kerry G."/>
            <person name="Heath P."/>
            <person name="Phillimore B."/>
            <person name="Tracey A."/>
            <person name="Corby N."/>
            <person name="Dunn M."/>
            <person name="Johnson C."/>
            <person name="Wood J."/>
            <person name="Clark S."/>
            <person name="Pelan S."/>
            <person name="Griffiths G."/>
            <person name="Smith M."/>
            <person name="Glithero R."/>
            <person name="Howden P."/>
            <person name="Barker N."/>
            <person name="Lloyd C."/>
            <person name="Stevens C."/>
            <person name="Harley J."/>
            <person name="Holt K."/>
            <person name="Panagiotidis G."/>
            <person name="Lovell J."/>
            <person name="Beasley H."/>
            <person name="Henderson C."/>
            <person name="Gordon D."/>
            <person name="Auger K."/>
            <person name="Wright D."/>
            <person name="Collins J."/>
            <person name="Raisen C."/>
            <person name="Dyer L."/>
            <person name="Leung K."/>
            <person name="Robertson L."/>
            <person name="Ambridge K."/>
            <person name="Leongamornlert D."/>
            <person name="McGuire S."/>
            <person name="Gilderthorp R."/>
            <person name="Griffiths C."/>
            <person name="Manthravadi D."/>
            <person name="Nichol S."/>
            <person name="Barker G."/>
            <person name="Whitehead S."/>
            <person name="Kay M."/>
            <person name="Brown J."/>
            <person name="Murnane C."/>
            <person name="Gray E."/>
            <person name="Humphries M."/>
            <person name="Sycamore N."/>
            <person name="Barker D."/>
            <person name="Saunders D."/>
            <person name="Wallis J."/>
            <person name="Babbage A."/>
            <person name="Hammond S."/>
            <person name="Mashreghi-Mohammadi M."/>
            <person name="Barr L."/>
            <person name="Martin S."/>
            <person name="Wray P."/>
            <person name="Ellington A."/>
            <person name="Matthews N."/>
            <person name="Ellwood M."/>
            <person name="Woodmansey R."/>
            <person name="Clark G."/>
            <person name="Cooper J."/>
            <person name="Tromans A."/>
            <person name="Grafham D."/>
            <person name="Skuce C."/>
            <person name="Pandian R."/>
            <person name="Andrews R."/>
            <person name="Harrison E."/>
            <person name="Kimberley A."/>
            <person name="Garnett J."/>
            <person name="Fosker N."/>
            <person name="Hall R."/>
            <person name="Garner P."/>
            <person name="Kelly D."/>
            <person name="Bird C."/>
            <person name="Palmer S."/>
            <person name="Gehring I."/>
            <person name="Berger A."/>
            <person name="Dooley C.M."/>
            <person name="Ersan-Urun Z."/>
            <person name="Eser C."/>
            <person name="Geiger H."/>
            <person name="Geisler M."/>
            <person name="Karotki L."/>
            <person name="Kirn A."/>
            <person name="Konantz J."/>
            <person name="Konantz M."/>
            <person name="Oberlander M."/>
            <person name="Rudolph-Geiger S."/>
            <person name="Teucke M."/>
            <person name="Lanz C."/>
            <person name="Raddatz G."/>
            <person name="Osoegawa K."/>
            <person name="Zhu B."/>
            <person name="Rapp A."/>
            <person name="Widaa S."/>
            <person name="Langford C."/>
            <person name="Yang F."/>
            <person name="Schuster S.C."/>
            <person name="Carter N.P."/>
            <person name="Harrow J."/>
            <person name="Ning Z."/>
            <person name="Herrero J."/>
            <person name="Searle S.M."/>
            <person name="Enright A."/>
            <person name="Geisler R."/>
            <person name="Plasterk R.H."/>
            <person name="Lee C."/>
            <person name="Westerfield M."/>
            <person name="de Jong P.J."/>
            <person name="Zon L.I."/>
            <person name="Postlethwait J.H."/>
            <person name="Nusslein-Volhard C."/>
            <person name="Hubbard T.J."/>
            <person name="Roest Crollius H."/>
            <person name="Rogers J."/>
            <person name="Stemple D.L."/>
        </authorList>
    </citation>
    <scope>NUCLEOTIDE SEQUENCE [LARGE SCALE GENOMIC DNA]</scope>
    <source>
        <strain>Tuebingen</strain>
    </source>
</reference>
<reference key="2">
    <citation type="submission" date="2007-06" db="EMBL/GenBank/DDBJ databases">
        <authorList>
            <consortium name="NIH - Zebrafish Gene Collection (ZGC) project"/>
        </authorList>
    </citation>
    <scope>NUCLEOTIDE SEQUENCE [LARGE SCALE MRNA]</scope>
    <source>
        <strain>AB</strain>
    </source>
</reference>
<reference key="3">
    <citation type="journal article" date="2012" name="Proc. Natl. Acad. Sci. U.S.A.">
        <title>Kinesin-2 family in vertebrate ciliogenesis.</title>
        <authorList>
            <person name="Zhao C."/>
            <person name="Omori Y."/>
            <person name="Brodowska K."/>
            <person name="Kovach P."/>
            <person name="Malicki J."/>
        </authorList>
    </citation>
    <scope>DISRUPTION PHENOTYPE</scope>
    <scope>FUNCTION</scope>
</reference>
<reference key="4">
    <citation type="journal article" date="2017" name="J. Biol. Chem.">
        <title>The cytoplasmic tail of rhodopsin triggers rapid rod degeneration in kinesin-2 mutants.</title>
        <authorList>
            <person name="Feng D."/>
            <person name="Chen Z."/>
            <person name="Yang K."/>
            <person name="Miao S."/>
            <person name="Xu B."/>
            <person name="Kang Y."/>
            <person name="Xie H."/>
            <person name="Zhao C."/>
        </authorList>
    </citation>
    <scope>DISRUPTION PHENOTYPE</scope>
    <scope>FUNCTION</scope>
</reference>
<dbReference type="EMBL" id="CU914163">
    <property type="status" value="NOT_ANNOTATED_CDS"/>
    <property type="molecule type" value="Genomic_DNA"/>
</dbReference>
<dbReference type="EMBL" id="FO904971">
    <property type="status" value="NOT_ANNOTATED_CDS"/>
    <property type="molecule type" value="Genomic_DNA"/>
</dbReference>
<dbReference type="EMBL" id="BC146722">
    <property type="protein sequence ID" value="AAI46723.1"/>
    <property type="molecule type" value="mRNA"/>
</dbReference>
<dbReference type="RefSeq" id="NP_001093615.1">
    <property type="nucleotide sequence ID" value="NM_001100145.1"/>
</dbReference>
<dbReference type="RefSeq" id="XP_009294904.1">
    <property type="nucleotide sequence ID" value="XM_009296629.2"/>
</dbReference>
<dbReference type="RefSeq" id="XP_068072748.1">
    <property type="nucleotide sequence ID" value="XM_068216647.1"/>
</dbReference>
<dbReference type="SMR" id="F1QN54"/>
<dbReference type="FunCoup" id="F1QN54">
    <property type="interactions" value="828"/>
</dbReference>
<dbReference type="STRING" id="7955.ENSDARP00000133077"/>
<dbReference type="PaxDb" id="7955-ENSDARP00000105893"/>
<dbReference type="Ensembl" id="ENSDART00000168199">
    <property type="protein sequence ID" value="ENSDARP00000133077"/>
    <property type="gene ID" value="ENSDARG00000101120"/>
</dbReference>
<dbReference type="Ensembl" id="ENSDART00000186852">
    <property type="protein sequence ID" value="ENSDARP00000150665"/>
    <property type="gene ID" value="ENSDARG00000101120"/>
</dbReference>
<dbReference type="GeneID" id="100101641"/>
<dbReference type="KEGG" id="dre:100101641"/>
<dbReference type="AGR" id="ZFIN:ZDB-GENE-050119-3"/>
<dbReference type="CTD" id="9371"/>
<dbReference type="ZFIN" id="ZDB-GENE-050119-3">
    <property type="gene designation" value="kif3b"/>
</dbReference>
<dbReference type="eggNOG" id="KOG4280">
    <property type="taxonomic scope" value="Eukaryota"/>
</dbReference>
<dbReference type="InParanoid" id="F1QN54"/>
<dbReference type="OMA" id="LESKMLC"/>
<dbReference type="OrthoDB" id="3176171at2759"/>
<dbReference type="PhylomeDB" id="F1QN54"/>
<dbReference type="TreeFam" id="TF105223"/>
<dbReference type="PRO" id="PR:F1QN54"/>
<dbReference type="Proteomes" id="UP000000437">
    <property type="component" value="Chromosome 23"/>
</dbReference>
<dbReference type="ExpressionAtlas" id="F1QN54">
    <property type="expression patterns" value="baseline and differential"/>
</dbReference>
<dbReference type="GO" id="GO:0005929">
    <property type="term" value="C:cilium"/>
    <property type="evidence" value="ECO:0007669"/>
    <property type="project" value="UniProtKB-SubCell"/>
</dbReference>
<dbReference type="GO" id="GO:0005737">
    <property type="term" value="C:cytoplasm"/>
    <property type="evidence" value="ECO:0000318"/>
    <property type="project" value="GO_Central"/>
</dbReference>
<dbReference type="GO" id="GO:0043197">
    <property type="term" value="C:dendritic spine"/>
    <property type="evidence" value="ECO:0007669"/>
    <property type="project" value="UniProtKB-SubCell"/>
</dbReference>
<dbReference type="GO" id="GO:0005871">
    <property type="term" value="C:kinesin complex"/>
    <property type="evidence" value="ECO:0000314"/>
    <property type="project" value="ZFIN"/>
</dbReference>
<dbReference type="GO" id="GO:0005874">
    <property type="term" value="C:microtubule"/>
    <property type="evidence" value="ECO:0000318"/>
    <property type="project" value="GO_Central"/>
</dbReference>
<dbReference type="GO" id="GO:0005524">
    <property type="term" value="F:ATP binding"/>
    <property type="evidence" value="ECO:0007669"/>
    <property type="project" value="UniProtKB-KW"/>
</dbReference>
<dbReference type="GO" id="GO:0016887">
    <property type="term" value="F:ATP hydrolysis activity"/>
    <property type="evidence" value="ECO:0000318"/>
    <property type="project" value="GO_Central"/>
</dbReference>
<dbReference type="GO" id="GO:0008017">
    <property type="term" value="F:microtubule binding"/>
    <property type="evidence" value="ECO:0000318"/>
    <property type="project" value="GO_Central"/>
</dbReference>
<dbReference type="GO" id="GO:0003777">
    <property type="term" value="F:microtubule motor activity"/>
    <property type="evidence" value="ECO:0000318"/>
    <property type="project" value="GO_Central"/>
</dbReference>
<dbReference type="GO" id="GO:0060271">
    <property type="term" value="P:cilium assembly"/>
    <property type="evidence" value="ECO:0000315"/>
    <property type="project" value="UniProtKB"/>
</dbReference>
<dbReference type="GO" id="GO:0048839">
    <property type="term" value="P:inner ear development"/>
    <property type="evidence" value="ECO:0000315"/>
    <property type="project" value="ZFIN"/>
</dbReference>
<dbReference type="GO" id="GO:0007018">
    <property type="term" value="P:microtubule-based movement"/>
    <property type="evidence" value="ECO:0000318"/>
    <property type="project" value="GO_Central"/>
</dbReference>
<dbReference type="GO" id="GO:0048884">
    <property type="term" value="P:neuromast development"/>
    <property type="evidence" value="ECO:0000315"/>
    <property type="project" value="ZFIN"/>
</dbReference>
<dbReference type="GO" id="GO:0043584">
    <property type="term" value="P:nose development"/>
    <property type="evidence" value="ECO:0000315"/>
    <property type="project" value="ZFIN"/>
</dbReference>
<dbReference type="GO" id="GO:0036372">
    <property type="term" value="P:opsin transport"/>
    <property type="evidence" value="ECO:0000250"/>
    <property type="project" value="UniProtKB"/>
</dbReference>
<dbReference type="GO" id="GO:0042461">
    <property type="term" value="P:photoreceptor cell development"/>
    <property type="evidence" value="ECO:0000315"/>
    <property type="project" value="UniProtKB"/>
</dbReference>
<dbReference type="GO" id="GO:0046530">
    <property type="term" value="P:photoreceptor cell differentiation"/>
    <property type="evidence" value="ECO:0000315"/>
    <property type="project" value="ZFIN"/>
</dbReference>
<dbReference type="GO" id="GO:0035845">
    <property type="term" value="P:photoreceptor cell outer segment organization"/>
    <property type="evidence" value="ECO:0000316"/>
    <property type="project" value="ZFIN"/>
</dbReference>
<dbReference type="GO" id="GO:0048793">
    <property type="term" value="P:pronephros development"/>
    <property type="evidence" value="ECO:0000315"/>
    <property type="project" value="ZFIN"/>
</dbReference>
<dbReference type="GO" id="GO:0060041">
    <property type="term" value="P:retina development in camera-type eye"/>
    <property type="evidence" value="ECO:0000315"/>
    <property type="project" value="ZFIN"/>
</dbReference>
<dbReference type="GO" id="GO:0060042">
    <property type="term" value="P:retina morphogenesis in camera-type eye"/>
    <property type="evidence" value="ECO:0000315"/>
    <property type="project" value="ZFIN"/>
</dbReference>
<dbReference type="CDD" id="cd01371">
    <property type="entry name" value="KISc_KIF3"/>
    <property type="match status" value="1"/>
</dbReference>
<dbReference type="FunFam" id="3.40.850.10:FF:000017">
    <property type="entry name" value="Kinesin-like protein"/>
    <property type="match status" value="1"/>
</dbReference>
<dbReference type="Gene3D" id="3.40.850.10">
    <property type="entry name" value="Kinesin motor domain"/>
    <property type="match status" value="1"/>
</dbReference>
<dbReference type="InterPro" id="IPR027640">
    <property type="entry name" value="Kinesin-like_fam"/>
</dbReference>
<dbReference type="InterPro" id="IPR019821">
    <property type="entry name" value="Kinesin_motor_CS"/>
</dbReference>
<dbReference type="InterPro" id="IPR001752">
    <property type="entry name" value="Kinesin_motor_dom"/>
</dbReference>
<dbReference type="InterPro" id="IPR036961">
    <property type="entry name" value="Kinesin_motor_dom_sf"/>
</dbReference>
<dbReference type="InterPro" id="IPR027417">
    <property type="entry name" value="P-loop_NTPase"/>
</dbReference>
<dbReference type="PANTHER" id="PTHR47969">
    <property type="entry name" value="CHROMOSOME-ASSOCIATED KINESIN KIF4A-RELATED"/>
    <property type="match status" value="1"/>
</dbReference>
<dbReference type="PANTHER" id="PTHR47969:SF21">
    <property type="entry name" value="KINESIN-LIKE PROTEIN"/>
    <property type="match status" value="1"/>
</dbReference>
<dbReference type="Pfam" id="PF00225">
    <property type="entry name" value="Kinesin"/>
    <property type="match status" value="1"/>
</dbReference>
<dbReference type="PRINTS" id="PR00380">
    <property type="entry name" value="KINESINHEAVY"/>
</dbReference>
<dbReference type="SMART" id="SM00129">
    <property type="entry name" value="KISc"/>
    <property type="match status" value="1"/>
</dbReference>
<dbReference type="SUPFAM" id="SSF52540">
    <property type="entry name" value="P-loop containing nucleoside triphosphate hydrolases"/>
    <property type="match status" value="1"/>
</dbReference>
<dbReference type="PROSITE" id="PS00411">
    <property type="entry name" value="KINESIN_MOTOR_1"/>
    <property type="match status" value="1"/>
</dbReference>
<dbReference type="PROSITE" id="PS50067">
    <property type="entry name" value="KINESIN_MOTOR_2"/>
    <property type="match status" value="1"/>
</dbReference>
<gene>
    <name evidence="8" type="primary">kif3b</name>
</gene>
<keyword id="KW-0067">ATP-binding</keyword>
<keyword id="KW-0966">Cell projection</keyword>
<keyword id="KW-0970">Cilium biogenesis/degradation</keyword>
<keyword id="KW-0175">Coiled coil</keyword>
<keyword id="KW-0963">Cytoplasm</keyword>
<keyword id="KW-0206">Cytoskeleton</keyword>
<keyword id="KW-0493">Microtubule</keyword>
<keyword id="KW-0505">Motor protein</keyword>
<keyword id="KW-0547">Nucleotide-binding</keyword>
<keyword id="KW-1185">Reference proteome</keyword>
<keyword id="KW-0770">Synapse</keyword>
<accession>F1QN54</accession>
<accession>A6H8R7</accession>
<sequence length="775" mass="88477">MSKSKSSESVKVVVRCRPMNEKERVANFNRVVSVDVKLGQVAVCNPRGASSHEHPKVFTFDSVYDWNSKQMELYDETFRPLVDSVLFGFNGTIFAYGQTGTGKTYTMEGVRNDPERRGVIPNSFEHIFTHISRSQNQQYLVRASYLEIYQEEIRDLLSKDQARRLELKERPDTGVYVKDLSSFVTKSVREIEHVMNVGNQNRSVGATNMNEHSSRSHAIFVITIECSELGPDGENHIRVGKLNLVDLAGSERQTKTGAQGERLKEATKINLSLSALGNVISALVDGRSTHIPYRDSKLTRLLQDSLGGNARTVMVANIGPASYNVEETLTTLRYANRAKNIKNKPRVNEDPKDALLREFQEEIARLKEQLEKRSGRKRRRRRRRRVGEGGEEFEDGEDEEDDDDDDEDEEEGVDADKNIADYWHEQQEKLEKERRAIMEDHSLVAEEKQRLLKEKERKMTDLHKEKEASEMLTAKVKAMESKLLVGGKNIVDHTNEQQKVLELKRQEIAEQKRREREMKQEMECRDEETLELKETYSSLQQEVDIKTKKLKKLFSKLQSVKSEIQDAQDEHVKYRQELEQTQNELTRELKLKHLIIENFIPMEEKNKIVTRATFDEEDDLWKMTPITRIQNSDHQMMKRPVSAVGYRRPLSQHARMAMLMRPDVRYKAENILLLELDLPSRTTKDYEGPVIAPKVAAALEDALREEDEIQVDASGFHASLGSSPGLSASAAGFSKKPKSGRPKTGKKVSTPTSAHSPLSGSGSPLYPQSRGLVPK</sequence>